<name>METN2_PSEE4</name>
<sequence length="335" mass="36860">MIEFQNVHKTYRVDGRDIPALNPTSLTIEDGQVFGLIGHSGAGKSTMLRLINRLEAPSGGKIIVDGEDVTAFDANQLRRFRQQVGMIFQHFNLLASKTVADNVALPLVLAGELSRGEIDKRVTELLARVGLQDHARKYPAQLSGGQKQRVGIARALSTNPKILLCDEATSALDPQTTASVLQLLAEINRELKLTIVLITHEMDVIRRVCDRVAVMDAGKIVEQGPVAEVFLHPEHPTTKRFVQEDEQVDEGEQRDDFAHVPGRIVRLTFQGDATYAPLLGTVARETGVDYSILAGRIDRIKDVPYGQLTLALIGGDMEAAFARFKAADVHMEVLR</sequence>
<keyword id="KW-0029">Amino-acid transport</keyword>
<keyword id="KW-0067">ATP-binding</keyword>
<keyword id="KW-0997">Cell inner membrane</keyword>
<keyword id="KW-1003">Cell membrane</keyword>
<keyword id="KW-0472">Membrane</keyword>
<keyword id="KW-0547">Nucleotide-binding</keyword>
<keyword id="KW-1278">Translocase</keyword>
<keyword id="KW-0813">Transport</keyword>
<accession>Q1IGZ0</accession>
<comment type="function">
    <text evidence="1">Part of the ABC transporter complex MetNIQ involved in methionine import. Responsible for energy coupling to the transport system.</text>
</comment>
<comment type="catalytic activity">
    <reaction evidence="1">
        <text>L-methionine(out) + ATP + H2O = L-methionine(in) + ADP + phosphate + H(+)</text>
        <dbReference type="Rhea" id="RHEA:29779"/>
        <dbReference type="ChEBI" id="CHEBI:15377"/>
        <dbReference type="ChEBI" id="CHEBI:15378"/>
        <dbReference type="ChEBI" id="CHEBI:30616"/>
        <dbReference type="ChEBI" id="CHEBI:43474"/>
        <dbReference type="ChEBI" id="CHEBI:57844"/>
        <dbReference type="ChEBI" id="CHEBI:456216"/>
        <dbReference type="EC" id="7.4.2.11"/>
    </reaction>
</comment>
<comment type="catalytic activity">
    <reaction evidence="1">
        <text>D-methionine(out) + ATP + H2O = D-methionine(in) + ADP + phosphate + H(+)</text>
        <dbReference type="Rhea" id="RHEA:29767"/>
        <dbReference type="ChEBI" id="CHEBI:15377"/>
        <dbReference type="ChEBI" id="CHEBI:15378"/>
        <dbReference type="ChEBI" id="CHEBI:30616"/>
        <dbReference type="ChEBI" id="CHEBI:43474"/>
        <dbReference type="ChEBI" id="CHEBI:57932"/>
        <dbReference type="ChEBI" id="CHEBI:456216"/>
        <dbReference type="EC" id="7.4.2.11"/>
    </reaction>
</comment>
<comment type="subunit">
    <text evidence="1">The complex is composed of two ATP-binding proteins (MetN), two transmembrane proteins (MetI) and a solute-binding protein (MetQ).</text>
</comment>
<comment type="subcellular location">
    <subcellularLocation>
        <location evidence="1">Cell inner membrane</location>
        <topology evidence="1">Peripheral membrane protein</topology>
    </subcellularLocation>
</comment>
<comment type="similarity">
    <text evidence="1">Belongs to the ABC transporter superfamily. Methionine importer (TC 3.A.1.24) family.</text>
</comment>
<evidence type="ECO:0000255" key="1">
    <source>
        <dbReference type="HAMAP-Rule" id="MF_01719"/>
    </source>
</evidence>
<feature type="chain" id="PRO_0000277692" description="Methionine import ATP-binding protein MetN 2">
    <location>
        <begin position="1"/>
        <end position="335"/>
    </location>
</feature>
<feature type="domain" description="ABC transporter" evidence="1">
    <location>
        <begin position="2"/>
        <end position="242"/>
    </location>
</feature>
<feature type="binding site" evidence="1">
    <location>
        <begin position="38"/>
        <end position="45"/>
    </location>
    <ligand>
        <name>ATP</name>
        <dbReference type="ChEBI" id="CHEBI:30616"/>
    </ligand>
</feature>
<gene>
    <name evidence="1" type="primary">metN2</name>
    <name type="ordered locus">PSEEN0068</name>
</gene>
<dbReference type="EC" id="7.4.2.11" evidence="1"/>
<dbReference type="EMBL" id="CT573326">
    <property type="protein sequence ID" value="CAK13062.1"/>
    <property type="molecule type" value="Genomic_DNA"/>
</dbReference>
<dbReference type="RefSeq" id="WP_011531523.1">
    <property type="nucleotide sequence ID" value="NC_008027.1"/>
</dbReference>
<dbReference type="SMR" id="Q1IGZ0"/>
<dbReference type="STRING" id="384676.PSEEN0068"/>
<dbReference type="GeneID" id="32803436"/>
<dbReference type="KEGG" id="pen:PSEEN0068"/>
<dbReference type="eggNOG" id="COG1135">
    <property type="taxonomic scope" value="Bacteria"/>
</dbReference>
<dbReference type="HOGENOM" id="CLU_000604_1_3_6"/>
<dbReference type="OrthoDB" id="9802264at2"/>
<dbReference type="Proteomes" id="UP000000658">
    <property type="component" value="Chromosome"/>
</dbReference>
<dbReference type="GO" id="GO:0005886">
    <property type="term" value="C:plasma membrane"/>
    <property type="evidence" value="ECO:0007669"/>
    <property type="project" value="UniProtKB-SubCell"/>
</dbReference>
<dbReference type="GO" id="GO:0033232">
    <property type="term" value="F:ABC-type D-methionine transporter activity"/>
    <property type="evidence" value="ECO:0007669"/>
    <property type="project" value="UniProtKB-EC"/>
</dbReference>
<dbReference type="GO" id="GO:0005524">
    <property type="term" value="F:ATP binding"/>
    <property type="evidence" value="ECO:0007669"/>
    <property type="project" value="UniProtKB-KW"/>
</dbReference>
<dbReference type="GO" id="GO:0016887">
    <property type="term" value="F:ATP hydrolysis activity"/>
    <property type="evidence" value="ECO:0007669"/>
    <property type="project" value="InterPro"/>
</dbReference>
<dbReference type="CDD" id="cd03258">
    <property type="entry name" value="ABC_MetN_methionine_transporter"/>
    <property type="match status" value="1"/>
</dbReference>
<dbReference type="FunFam" id="3.40.50.300:FF:000056">
    <property type="entry name" value="Cell division ATP-binding protein FtsE"/>
    <property type="match status" value="1"/>
</dbReference>
<dbReference type="FunFam" id="3.30.70.260:FF:000038">
    <property type="entry name" value="Methionine import ATP-binding protein MetN"/>
    <property type="match status" value="1"/>
</dbReference>
<dbReference type="Gene3D" id="3.30.70.260">
    <property type="match status" value="1"/>
</dbReference>
<dbReference type="Gene3D" id="3.40.50.300">
    <property type="entry name" value="P-loop containing nucleotide triphosphate hydrolases"/>
    <property type="match status" value="1"/>
</dbReference>
<dbReference type="InterPro" id="IPR003593">
    <property type="entry name" value="AAA+_ATPase"/>
</dbReference>
<dbReference type="InterPro" id="IPR003439">
    <property type="entry name" value="ABC_transporter-like_ATP-bd"/>
</dbReference>
<dbReference type="InterPro" id="IPR017871">
    <property type="entry name" value="ABC_transporter-like_CS"/>
</dbReference>
<dbReference type="InterPro" id="IPR045865">
    <property type="entry name" value="ACT-like_dom_sf"/>
</dbReference>
<dbReference type="InterPro" id="IPR041701">
    <property type="entry name" value="MetN_ABC"/>
</dbReference>
<dbReference type="InterPro" id="IPR050086">
    <property type="entry name" value="MetN_ABC_transporter-like"/>
</dbReference>
<dbReference type="InterPro" id="IPR018449">
    <property type="entry name" value="NIL_domain"/>
</dbReference>
<dbReference type="InterPro" id="IPR027417">
    <property type="entry name" value="P-loop_NTPase"/>
</dbReference>
<dbReference type="PANTHER" id="PTHR43166">
    <property type="entry name" value="AMINO ACID IMPORT ATP-BINDING PROTEIN"/>
    <property type="match status" value="1"/>
</dbReference>
<dbReference type="PANTHER" id="PTHR43166:SF30">
    <property type="entry name" value="METHIONINE IMPORT ATP-BINDING PROTEIN METN"/>
    <property type="match status" value="1"/>
</dbReference>
<dbReference type="Pfam" id="PF00005">
    <property type="entry name" value="ABC_tran"/>
    <property type="match status" value="1"/>
</dbReference>
<dbReference type="Pfam" id="PF09383">
    <property type="entry name" value="NIL"/>
    <property type="match status" value="1"/>
</dbReference>
<dbReference type="SMART" id="SM00382">
    <property type="entry name" value="AAA"/>
    <property type="match status" value="1"/>
</dbReference>
<dbReference type="SMART" id="SM00930">
    <property type="entry name" value="NIL"/>
    <property type="match status" value="1"/>
</dbReference>
<dbReference type="SUPFAM" id="SSF55021">
    <property type="entry name" value="ACT-like"/>
    <property type="match status" value="1"/>
</dbReference>
<dbReference type="SUPFAM" id="SSF52540">
    <property type="entry name" value="P-loop containing nucleoside triphosphate hydrolases"/>
    <property type="match status" value="1"/>
</dbReference>
<dbReference type="PROSITE" id="PS00211">
    <property type="entry name" value="ABC_TRANSPORTER_1"/>
    <property type="match status" value="1"/>
</dbReference>
<dbReference type="PROSITE" id="PS50893">
    <property type="entry name" value="ABC_TRANSPORTER_2"/>
    <property type="match status" value="1"/>
</dbReference>
<dbReference type="PROSITE" id="PS51264">
    <property type="entry name" value="METN"/>
    <property type="match status" value="1"/>
</dbReference>
<organism>
    <name type="scientific">Pseudomonas entomophila (strain L48)</name>
    <dbReference type="NCBI Taxonomy" id="384676"/>
    <lineage>
        <taxon>Bacteria</taxon>
        <taxon>Pseudomonadati</taxon>
        <taxon>Pseudomonadota</taxon>
        <taxon>Gammaproteobacteria</taxon>
        <taxon>Pseudomonadales</taxon>
        <taxon>Pseudomonadaceae</taxon>
        <taxon>Pseudomonas</taxon>
    </lineage>
</organism>
<protein>
    <recommendedName>
        <fullName evidence="1">Methionine import ATP-binding protein MetN 2</fullName>
        <ecNumber evidence="1">7.4.2.11</ecNumber>
    </recommendedName>
</protein>
<proteinExistence type="inferred from homology"/>
<reference key="1">
    <citation type="journal article" date="2006" name="Nat. Biotechnol.">
        <title>Complete genome sequence of the entomopathogenic and metabolically versatile soil bacterium Pseudomonas entomophila.</title>
        <authorList>
            <person name="Vodovar N."/>
            <person name="Vallenet D."/>
            <person name="Cruveiller S."/>
            <person name="Rouy Z."/>
            <person name="Barbe V."/>
            <person name="Acosta C."/>
            <person name="Cattolico L."/>
            <person name="Jubin C."/>
            <person name="Lajus A."/>
            <person name="Segurens B."/>
            <person name="Vacherie B."/>
            <person name="Wincker P."/>
            <person name="Weissenbach J."/>
            <person name="Lemaitre B."/>
            <person name="Medigue C."/>
            <person name="Boccard F."/>
        </authorList>
    </citation>
    <scope>NUCLEOTIDE SEQUENCE [LARGE SCALE GENOMIC DNA]</scope>
    <source>
        <strain>L48</strain>
    </source>
</reference>